<reference key="1">
    <citation type="journal article" date="2007" name="Nat. Biotechnol.">
        <title>Complete genome sequence of the myxobacterium Sorangium cellulosum.</title>
        <authorList>
            <person name="Schneiker S."/>
            <person name="Perlova O."/>
            <person name="Kaiser O."/>
            <person name="Gerth K."/>
            <person name="Alici A."/>
            <person name="Altmeyer M.O."/>
            <person name="Bartels D."/>
            <person name="Bekel T."/>
            <person name="Beyer S."/>
            <person name="Bode E."/>
            <person name="Bode H.B."/>
            <person name="Bolten C.J."/>
            <person name="Choudhuri J.V."/>
            <person name="Doss S."/>
            <person name="Elnakady Y.A."/>
            <person name="Frank B."/>
            <person name="Gaigalat L."/>
            <person name="Goesmann A."/>
            <person name="Groeger C."/>
            <person name="Gross F."/>
            <person name="Jelsbak L."/>
            <person name="Jelsbak L."/>
            <person name="Kalinowski J."/>
            <person name="Kegler C."/>
            <person name="Knauber T."/>
            <person name="Konietzny S."/>
            <person name="Kopp M."/>
            <person name="Krause L."/>
            <person name="Krug D."/>
            <person name="Linke B."/>
            <person name="Mahmud T."/>
            <person name="Martinez-Arias R."/>
            <person name="McHardy A.C."/>
            <person name="Merai M."/>
            <person name="Meyer F."/>
            <person name="Mormann S."/>
            <person name="Munoz-Dorado J."/>
            <person name="Perez J."/>
            <person name="Pradella S."/>
            <person name="Rachid S."/>
            <person name="Raddatz G."/>
            <person name="Rosenau F."/>
            <person name="Rueckert C."/>
            <person name="Sasse F."/>
            <person name="Scharfe M."/>
            <person name="Schuster S.C."/>
            <person name="Suen G."/>
            <person name="Treuner-Lange A."/>
            <person name="Velicer G.J."/>
            <person name="Vorholter F.-J."/>
            <person name="Weissman K.J."/>
            <person name="Welch R.D."/>
            <person name="Wenzel S.C."/>
            <person name="Whitworth D.E."/>
            <person name="Wilhelm S."/>
            <person name="Wittmann C."/>
            <person name="Bloecker H."/>
            <person name="Puehler A."/>
            <person name="Mueller R."/>
        </authorList>
    </citation>
    <scope>NUCLEOTIDE SEQUENCE [LARGE SCALE GENOMIC DNA]</scope>
    <source>
        <strain>So ce56</strain>
    </source>
</reference>
<sequence length="99" mass="10760">MPRSIKKGPFIDGHLLEKIQAAQATNAKKVIKTWSRRSTILPESVGLTFAVHNGRKFVPVFVTENMVGHKLGEFAPTRTFHGHSGDKKAKVAKGGPGGR</sequence>
<gene>
    <name evidence="1" type="primary">rpsS</name>
    <name type="ordered locus">sce0846</name>
</gene>
<accession>A9ETF4</accession>
<proteinExistence type="inferred from homology"/>
<keyword id="KW-1185">Reference proteome</keyword>
<keyword id="KW-0687">Ribonucleoprotein</keyword>
<keyword id="KW-0689">Ribosomal protein</keyword>
<keyword id="KW-0694">RNA-binding</keyword>
<keyword id="KW-0699">rRNA-binding</keyword>
<comment type="function">
    <text evidence="1">Protein S19 forms a complex with S13 that binds strongly to the 16S ribosomal RNA.</text>
</comment>
<comment type="similarity">
    <text evidence="1">Belongs to the universal ribosomal protein uS19 family.</text>
</comment>
<name>RS19_SORC5</name>
<feature type="chain" id="PRO_0000354300" description="Small ribosomal subunit protein uS19">
    <location>
        <begin position="1"/>
        <end position="99"/>
    </location>
</feature>
<feature type="region of interest" description="Disordered" evidence="2">
    <location>
        <begin position="77"/>
        <end position="99"/>
    </location>
</feature>
<protein>
    <recommendedName>
        <fullName evidence="1">Small ribosomal subunit protein uS19</fullName>
    </recommendedName>
    <alternativeName>
        <fullName evidence="3">30S ribosomal protein S19</fullName>
    </alternativeName>
</protein>
<dbReference type="EMBL" id="AM746676">
    <property type="protein sequence ID" value="CAN91003.1"/>
    <property type="molecule type" value="Genomic_DNA"/>
</dbReference>
<dbReference type="RefSeq" id="WP_012233480.1">
    <property type="nucleotide sequence ID" value="NC_010162.1"/>
</dbReference>
<dbReference type="SMR" id="A9ETF4"/>
<dbReference type="STRING" id="448385.sce0846"/>
<dbReference type="KEGG" id="scl:sce0846"/>
<dbReference type="eggNOG" id="COG0185">
    <property type="taxonomic scope" value="Bacteria"/>
</dbReference>
<dbReference type="HOGENOM" id="CLU_144911_0_1_7"/>
<dbReference type="OrthoDB" id="9797833at2"/>
<dbReference type="BioCyc" id="SCEL448385:SCE_RS04435-MONOMER"/>
<dbReference type="Proteomes" id="UP000002139">
    <property type="component" value="Chromosome"/>
</dbReference>
<dbReference type="GO" id="GO:0005737">
    <property type="term" value="C:cytoplasm"/>
    <property type="evidence" value="ECO:0007669"/>
    <property type="project" value="UniProtKB-ARBA"/>
</dbReference>
<dbReference type="GO" id="GO:0015935">
    <property type="term" value="C:small ribosomal subunit"/>
    <property type="evidence" value="ECO:0007669"/>
    <property type="project" value="InterPro"/>
</dbReference>
<dbReference type="GO" id="GO:0019843">
    <property type="term" value="F:rRNA binding"/>
    <property type="evidence" value="ECO:0007669"/>
    <property type="project" value="UniProtKB-UniRule"/>
</dbReference>
<dbReference type="GO" id="GO:0003735">
    <property type="term" value="F:structural constituent of ribosome"/>
    <property type="evidence" value="ECO:0007669"/>
    <property type="project" value="InterPro"/>
</dbReference>
<dbReference type="GO" id="GO:0000028">
    <property type="term" value="P:ribosomal small subunit assembly"/>
    <property type="evidence" value="ECO:0007669"/>
    <property type="project" value="TreeGrafter"/>
</dbReference>
<dbReference type="GO" id="GO:0006412">
    <property type="term" value="P:translation"/>
    <property type="evidence" value="ECO:0007669"/>
    <property type="project" value="UniProtKB-UniRule"/>
</dbReference>
<dbReference type="FunFam" id="3.30.860.10:FF:000001">
    <property type="entry name" value="30S ribosomal protein S19"/>
    <property type="match status" value="1"/>
</dbReference>
<dbReference type="Gene3D" id="3.30.860.10">
    <property type="entry name" value="30s Ribosomal Protein S19, Chain A"/>
    <property type="match status" value="1"/>
</dbReference>
<dbReference type="HAMAP" id="MF_00531">
    <property type="entry name" value="Ribosomal_uS19"/>
    <property type="match status" value="1"/>
</dbReference>
<dbReference type="InterPro" id="IPR002222">
    <property type="entry name" value="Ribosomal_uS19"/>
</dbReference>
<dbReference type="InterPro" id="IPR005732">
    <property type="entry name" value="Ribosomal_uS19_bac-type"/>
</dbReference>
<dbReference type="InterPro" id="IPR020934">
    <property type="entry name" value="Ribosomal_uS19_CS"/>
</dbReference>
<dbReference type="InterPro" id="IPR023575">
    <property type="entry name" value="Ribosomal_uS19_SF"/>
</dbReference>
<dbReference type="NCBIfam" id="TIGR01050">
    <property type="entry name" value="rpsS_bact"/>
    <property type="match status" value="1"/>
</dbReference>
<dbReference type="PANTHER" id="PTHR11880">
    <property type="entry name" value="RIBOSOMAL PROTEIN S19P FAMILY MEMBER"/>
    <property type="match status" value="1"/>
</dbReference>
<dbReference type="PANTHER" id="PTHR11880:SF8">
    <property type="entry name" value="SMALL RIBOSOMAL SUBUNIT PROTEIN US19M"/>
    <property type="match status" value="1"/>
</dbReference>
<dbReference type="Pfam" id="PF00203">
    <property type="entry name" value="Ribosomal_S19"/>
    <property type="match status" value="1"/>
</dbReference>
<dbReference type="PIRSF" id="PIRSF002144">
    <property type="entry name" value="Ribosomal_S19"/>
    <property type="match status" value="1"/>
</dbReference>
<dbReference type="PRINTS" id="PR00975">
    <property type="entry name" value="RIBOSOMALS19"/>
</dbReference>
<dbReference type="SUPFAM" id="SSF54570">
    <property type="entry name" value="Ribosomal protein S19"/>
    <property type="match status" value="1"/>
</dbReference>
<dbReference type="PROSITE" id="PS00323">
    <property type="entry name" value="RIBOSOMAL_S19"/>
    <property type="match status" value="1"/>
</dbReference>
<organism>
    <name type="scientific">Sorangium cellulosum (strain So ce56)</name>
    <name type="common">Polyangium cellulosum (strain So ce56)</name>
    <dbReference type="NCBI Taxonomy" id="448385"/>
    <lineage>
        <taxon>Bacteria</taxon>
        <taxon>Pseudomonadati</taxon>
        <taxon>Myxococcota</taxon>
        <taxon>Polyangia</taxon>
        <taxon>Polyangiales</taxon>
        <taxon>Polyangiaceae</taxon>
        <taxon>Sorangium</taxon>
    </lineage>
</organism>
<evidence type="ECO:0000255" key="1">
    <source>
        <dbReference type="HAMAP-Rule" id="MF_00531"/>
    </source>
</evidence>
<evidence type="ECO:0000256" key="2">
    <source>
        <dbReference type="SAM" id="MobiDB-lite"/>
    </source>
</evidence>
<evidence type="ECO:0000305" key="3"/>